<reference key="1">
    <citation type="journal article" date="1993" name="Infect. Immun.">
        <title>Cloning and characterization of the Actinobacillus pleuropneumoniae-RTX-toxin III (ApxIII) gene.</title>
        <authorList>
            <person name="Jansen R."/>
            <person name="Briaire J."/>
            <person name="Kamp E.M."/>
            <person name="Gielkens A.L.J."/>
            <person name="Smits M.A."/>
        </authorList>
    </citation>
    <scope>NUCLEOTIDE SEQUENCE [GENOMIC DNA]</scope>
    <source>
        <strain>405 / Serotype 8</strain>
    </source>
</reference>
<reference key="2">
    <citation type="journal article" date="1993" name="DNA Cell Biol.">
        <title>Molecular analysis of the Actinobacillus pleuropneumoniae RTX toxin-III gene cluster.</title>
        <authorList>
            <person name="Chang Y.-F."/>
            <person name="Shi J."/>
            <person name="Ma D.-P."/>
            <person name="Shin S.J."/>
            <person name="Lein D.H."/>
        </authorList>
    </citation>
    <scope>NUCLEOTIDE SEQUENCE [GENOMIC DNA]</scope>
    <source>
        <strain>Serotype 2</strain>
    </source>
</reference>
<reference key="3">
    <citation type="journal article" date="1994" name="Infect. Immun.">
        <title>Genetic map of the Actinobacillus pleuropneumoniae RTX-toxin (Apx) operons: characterization of the ApxIII operons.</title>
        <authorList>
            <person name="Jansen R."/>
            <person name="Briaire J."/>
            <person name="van Geel A.B.M."/>
            <person name="Kamp E.M."/>
            <person name="Gielkens A.L.J."/>
            <person name="Smits M.A."/>
        </authorList>
    </citation>
    <scope>NUCLEOTIDE SEQUENCE [GENOMIC DNA]</scope>
    <source>
        <strain>405 / Serotype 8</strain>
    </source>
</reference>
<comment type="function">
    <text evidence="1">Protein-lysine acyltransferase that catalyzes fatty acylation of the protoxin, thereby converting it to the active toxin.</text>
</comment>
<comment type="catalytic activity">
    <reaction evidence="1">
        <text>a fatty acyl-[ACP] + L-lysyl-[protein] = N(6)-(fatty acyl)-L-lysyl-[protein] + holo-[ACP] + H(+)</text>
        <dbReference type="Rhea" id="RHEA:70667"/>
        <dbReference type="Rhea" id="RHEA-COMP:9685"/>
        <dbReference type="Rhea" id="RHEA-COMP:9752"/>
        <dbReference type="Rhea" id="RHEA-COMP:14125"/>
        <dbReference type="Rhea" id="RHEA-COMP:17946"/>
        <dbReference type="ChEBI" id="CHEBI:15378"/>
        <dbReference type="ChEBI" id="CHEBI:29969"/>
        <dbReference type="ChEBI" id="CHEBI:64479"/>
        <dbReference type="ChEBI" id="CHEBI:138651"/>
        <dbReference type="ChEBI" id="CHEBI:189854"/>
    </reaction>
    <physiologicalReaction direction="left-to-right" evidence="1">
        <dbReference type="Rhea" id="RHEA:70668"/>
    </physiologicalReaction>
</comment>
<comment type="subunit">
    <text evidence="1">Homodimer.</text>
</comment>
<comment type="subcellular location">
    <subcellularLocation>
        <location evidence="2">Cytoplasm</location>
    </subcellularLocation>
</comment>
<comment type="similarity">
    <text evidence="2">Belongs to the RTX toxin acyltransferase family.</text>
</comment>
<organism>
    <name type="scientific">Actinobacillus pleuropneumoniae</name>
    <name type="common">Haemophilus pleuropneumoniae</name>
    <dbReference type="NCBI Taxonomy" id="715"/>
    <lineage>
        <taxon>Bacteria</taxon>
        <taxon>Pseudomonadati</taxon>
        <taxon>Pseudomonadota</taxon>
        <taxon>Gammaproteobacteria</taxon>
        <taxon>Pasteurellales</taxon>
        <taxon>Pasteurellaceae</taxon>
        <taxon>Actinobacillus</taxon>
    </lineage>
</organism>
<sequence>MSYKNVKNLTDDFTTLGHIAWLWANSPLHKEWSISLFTKNILPAIQHDQYILLMRDEFPVAFCSWANLTLTNEVKYVRDVTSLTFEDWNSGERKWLIDWIAPFGDNNTLYRYMRKKFPNEVFRAIRVYPGSTEAKIIHVQGGQINKFTAKKLIQQYQEELIQVLNNHKKIVRG</sequence>
<dbReference type="EC" id="2.3.1.-" evidence="1"/>
<dbReference type="EMBL" id="X68815">
    <property type="protein sequence ID" value="CAA48710.1"/>
    <property type="molecule type" value="Genomic_DNA"/>
</dbReference>
<dbReference type="EMBL" id="L12145">
    <property type="protein sequence ID" value="AAA21923.1"/>
    <property type="molecule type" value="Genomic_DNA"/>
</dbReference>
<dbReference type="EMBL" id="X80055">
    <property type="protein sequence ID" value="CAA56357.1"/>
    <property type="molecule type" value="Genomic_DNA"/>
</dbReference>
<dbReference type="PIR" id="A49219">
    <property type="entry name" value="A49219"/>
</dbReference>
<dbReference type="RefSeq" id="WP_005605169.1">
    <property type="nucleotide sequence ID" value="NZ_UIFY01000002.1"/>
</dbReference>
<dbReference type="SMR" id="Q04474"/>
<dbReference type="OrthoDB" id="8596436at2"/>
<dbReference type="GO" id="GO:0005737">
    <property type="term" value="C:cytoplasm"/>
    <property type="evidence" value="ECO:0007669"/>
    <property type="project" value="UniProtKB-SubCell"/>
</dbReference>
<dbReference type="GO" id="GO:0016746">
    <property type="term" value="F:acyltransferase activity"/>
    <property type="evidence" value="ECO:0007669"/>
    <property type="project" value="UniProtKB-KW"/>
</dbReference>
<dbReference type="GO" id="GO:0031640">
    <property type="term" value="P:killing of cells of another organism"/>
    <property type="evidence" value="ECO:0007669"/>
    <property type="project" value="UniProtKB-KW"/>
</dbReference>
<dbReference type="GO" id="GO:0009404">
    <property type="term" value="P:toxin metabolic process"/>
    <property type="evidence" value="ECO:0007669"/>
    <property type="project" value="InterPro"/>
</dbReference>
<dbReference type="InterPro" id="IPR003996">
    <property type="entry name" value="RTX_toxin-activating_protC_bac"/>
</dbReference>
<dbReference type="Pfam" id="PF02794">
    <property type="entry name" value="HlyC"/>
    <property type="match status" value="1"/>
</dbReference>
<dbReference type="PRINTS" id="PR01489">
    <property type="entry name" value="RTXTOXINC"/>
</dbReference>
<keyword id="KW-0012">Acyltransferase</keyword>
<keyword id="KW-0204">Cytolysis</keyword>
<keyword id="KW-0963">Cytoplasm</keyword>
<keyword id="KW-0808">Transferase</keyword>
<evidence type="ECO:0000250" key="1">
    <source>
        <dbReference type="UniProtKB" id="P55132"/>
    </source>
</evidence>
<evidence type="ECO:0000305" key="2"/>
<protein>
    <recommendedName>
        <fullName>RTX-III toxin-activating lysine-acyltransferase ApxIIC</fullName>
        <ecNumber evidence="1">2.3.1.-</ecNumber>
    </recommendedName>
    <alternativeName>
        <fullName>APX-IIIC</fullName>
    </alternativeName>
    <alternativeName>
        <fullName>Cytolysin IIIC</fullName>
        <shortName>CLY-IIIC</shortName>
    </alternativeName>
    <alternativeName>
        <fullName>RTX-III toxin determinant C</fullName>
    </alternativeName>
    <alternativeName>
        <fullName>Toxin RTX-III-activating protein C</fullName>
    </alternativeName>
</protein>
<feature type="chain" id="PRO_0000217886" description="RTX-III toxin-activating lysine-acyltransferase ApxIIC">
    <location>
        <begin position="1"/>
        <end position="173"/>
    </location>
</feature>
<feature type="active site" evidence="1">
    <location>
        <position position="29"/>
    </location>
</feature>
<feature type="active site" evidence="1">
    <location>
        <position position="98"/>
    </location>
</feature>
<gene>
    <name type="primary">apxIIIC</name>
    <name type="synonym">clyIIIC</name>
    <name type="synonym">rtxC</name>
</gene>
<name>RTX3C_ACTPL</name>
<accession>Q04474</accession>
<proteinExistence type="inferred from homology"/>